<evidence type="ECO:0000255" key="1">
    <source>
        <dbReference type="HAMAP-Rule" id="MF_00073"/>
    </source>
</evidence>
<dbReference type="EMBL" id="CR543861">
    <property type="protein sequence ID" value="CAG70213.1"/>
    <property type="molecule type" value="Genomic_DNA"/>
</dbReference>
<dbReference type="RefSeq" id="WP_004923188.1">
    <property type="nucleotide sequence ID" value="NC_005966.1"/>
</dbReference>
<dbReference type="SMR" id="Q6F6V2"/>
<dbReference type="STRING" id="202950.GCA_001485005_01644"/>
<dbReference type="GeneID" id="45235745"/>
<dbReference type="KEGG" id="aci:ACIAD3572"/>
<dbReference type="eggNOG" id="COG0781">
    <property type="taxonomic scope" value="Bacteria"/>
</dbReference>
<dbReference type="HOGENOM" id="CLU_087843_4_1_6"/>
<dbReference type="OrthoDB" id="9789556at2"/>
<dbReference type="BioCyc" id="ASP62977:ACIAD_RS16160-MONOMER"/>
<dbReference type="Proteomes" id="UP000000430">
    <property type="component" value="Chromosome"/>
</dbReference>
<dbReference type="GO" id="GO:0005829">
    <property type="term" value="C:cytosol"/>
    <property type="evidence" value="ECO:0007669"/>
    <property type="project" value="TreeGrafter"/>
</dbReference>
<dbReference type="GO" id="GO:0003723">
    <property type="term" value="F:RNA binding"/>
    <property type="evidence" value="ECO:0007669"/>
    <property type="project" value="UniProtKB-UniRule"/>
</dbReference>
<dbReference type="GO" id="GO:0006353">
    <property type="term" value="P:DNA-templated transcription termination"/>
    <property type="evidence" value="ECO:0007669"/>
    <property type="project" value="UniProtKB-UniRule"/>
</dbReference>
<dbReference type="GO" id="GO:0031564">
    <property type="term" value="P:transcription antitermination"/>
    <property type="evidence" value="ECO:0007669"/>
    <property type="project" value="UniProtKB-KW"/>
</dbReference>
<dbReference type="Gene3D" id="1.10.940.10">
    <property type="entry name" value="NusB-like"/>
    <property type="match status" value="1"/>
</dbReference>
<dbReference type="HAMAP" id="MF_00073">
    <property type="entry name" value="NusB"/>
    <property type="match status" value="1"/>
</dbReference>
<dbReference type="InterPro" id="IPR035926">
    <property type="entry name" value="NusB-like_sf"/>
</dbReference>
<dbReference type="InterPro" id="IPR011605">
    <property type="entry name" value="NusB_fam"/>
</dbReference>
<dbReference type="InterPro" id="IPR006027">
    <property type="entry name" value="NusB_RsmB_TIM44"/>
</dbReference>
<dbReference type="NCBIfam" id="TIGR01951">
    <property type="entry name" value="nusB"/>
    <property type="match status" value="1"/>
</dbReference>
<dbReference type="PANTHER" id="PTHR11078:SF3">
    <property type="entry name" value="ANTITERMINATION NUSB DOMAIN-CONTAINING PROTEIN"/>
    <property type="match status" value="1"/>
</dbReference>
<dbReference type="PANTHER" id="PTHR11078">
    <property type="entry name" value="N UTILIZATION SUBSTANCE PROTEIN B-RELATED"/>
    <property type="match status" value="1"/>
</dbReference>
<dbReference type="Pfam" id="PF01029">
    <property type="entry name" value="NusB"/>
    <property type="match status" value="1"/>
</dbReference>
<dbReference type="SUPFAM" id="SSF48013">
    <property type="entry name" value="NusB-like"/>
    <property type="match status" value="1"/>
</dbReference>
<name>NUSB_ACIAD</name>
<protein>
    <recommendedName>
        <fullName evidence="1">Transcription antitermination protein NusB</fullName>
    </recommendedName>
    <alternativeName>
        <fullName evidence="1">Antitermination factor NusB</fullName>
    </alternativeName>
</protein>
<organism>
    <name type="scientific">Acinetobacter baylyi (strain ATCC 33305 / BD413 / ADP1)</name>
    <dbReference type="NCBI Taxonomy" id="62977"/>
    <lineage>
        <taxon>Bacteria</taxon>
        <taxon>Pseudomonadati</taxon>
        <taxon>Pseudomonadota</taxon>
        <taxon>Gammaproteobacteria</taxon>
        <taxon>Moraxellales</taxon>
        <taxon>Moraxellaceae</taxon>
        <taxon>Acinetobacter</taxon>
    </lineage>
</organism>
<proteinExistence type="inferred from homology"/>
<gene>
    <name evidence="1" type="primary">nusB</name>
    <name type="ordered locus">ACIAD3572</name>
</gene>
<feature type="chain" id="PRO_0000265475" description="Transcription antitermination protein NusB">
    <location>
        <begin position="1"/>
        <end position="149"/>
    </location>
</feature>
<keyword id="KW-0694">RNA-binding</keyword>
<keyword id="KW-0804">Transcription</keyword>
<keyword id="KW-0889">Transcription antitermination</keyword>
<keyword id="KW-0805">Transcription regulation</keyword>
<comment type="function">
    <text evidence="1">Involved in transcription antitermination. Required for transcription of ribosomal RNA (rRNA) genes. Binds specifically to the boxA antiterminator sequence of the ribosomal RNA (rrn) operons.</text>
</comment>
<comment type="similarity">
    <text evidence="1">Belongs to the NusB family.</text>
</comment>
<accession>Q6F6V2</accession>
<reference key="1">
    <citation type="journal article" date="2004" name="Nucleic Acids Res.">
        <title>Unique features revealed by the genome sequence of Acinetobacter sp. ADP1, a versatile and naturally transformation competent bacterium.</title>
        <authorList>
            <person name="Barbe V."/>
            <person name="Vallenet D."/>
            <person name="Fonknechten N."/>
            <person name="Kreimeyer A."/>
            <person name="Oztas S."/>
            <person name="Labarre L."/>
            <person name="Cruveiller S."/>
            <person name="Robert C."/>
            <person name="Duprat S."/>
            <person name="Wincker P."/>
            <person name="Ornston L.N."/>
            <person name="Weissenbach J."/>
            <person name="Marliere P."/>
            <person name="Cohen G.N."/>
            <person name="Medigue C."/>
        </authorList>
    </citation>
    <scope>NUCLEOTIDE SEQUENCE [LARGE SCALE GENOMIC DNA]</scope>
    <source>
        <strain>ATCC 33305 / BD413 / ADP1</strain>
    </source>
</reference>
<sequence length="149" mass="17061">MSQTLQAAYAAKRKARRFAVQGIYEWQMSRNPVHEIEARTRVENAMHKVDLGYYHELLTQVVAQHETLDTLLVPVLDRELNALDGVELATLRLGAYELRDHLEIPYRVVLDEAIELAKHFGGADSHKYINGVLDRLASRLREAEKQQAN</sequence>